<dbReference type="EMBL" id="X54869">
    <property type="protein sequence ID" value="CAA38651.1"/>
    <property type="molecule type" value="mRNA"/>
</dbReference>
<dbReference type="EMBL" id="AJ001684">
    <property type="protein sequence ID" value="CAA04922.1"/>
    <property type="molecule type" value="Genomic_DNA"/>
</dbReference>
<dbReference type="EMBL" id="AF260134">
    <property type="protein sequence ID" value="AAF86972.1"/>
    <property type="molecule type" value="mRNA"/>
</dbReference>
<dbReference type="EMBL" id="Y13055">
    <property type="protein sequence ID" value="CAA73498.1"/>
    <property type="molecule type" value="mRNA"/>
</dbReference>
<dbReference type="EMBL" id="AC068775">
    <property type="status" value="NOT_ANNOTATED_CDS"/>
    <property type="molecule type" value="Genomic_DNA"/>
</dbReference>
<dbReference type="EMBL" id="BC093644">
    <property type="protein sequence ID" value="AAH93644.1"/>
    <property type="molecule type" value="mRNA"/>
</dbReference>
<dbReference type="EMBL" id="BC112039">
    <property type="protein sequence ID" value="AAI12040.1"/>
    <property type="molecule type" value="mRNA"/>
</dbReference>
<dbReference type="CCDS" id="CCDS31745.1"/>
<dbReference type="PIR" id="PT0374">
    <property type="entry name" value="PT0374"/>
</dbReference>
<dbReference type="RefSeq" id="NP_002251.2">
    <property type="nucleotide sequence ID" value="NM_002260.4"/>
</dbReference>
<dbReference type="PDB" id="2L35">
    <property type="method" value="NMR"/>
    <property type="chains" value="A=72-100"/>
</dbReference>
<dbReference type="PDBsum" id="2L35"/>
<dbReference type="SMR" id="P26717"/>
<dbReference type="BioGRID" id="110021">
    <property type="interactions" value="52"/>
</dbReference>
<dbReference type="ComplexPortal" id="CPX-5901">
    <property type="entry name" value="CD94-NKG2C natural killer receptor complex"/>
</dbReference>
<dbReference type="FunCoup" id="P26717">
    <property type="interactions" value="218"/>
</dbReference>
<dbReference type="IntAct" id="P26717">
    <property type="interactions" value="45"/>
</dbReference>
<dbReference type="STRING" id="9606.ENSP00000371327"/>
<dbReference type="GlyCosmos" id="P26717">
    <property type="glycosylation" value="3 sites, No reported glycans"/>
</dbReference>
<dbReference type="GlyGen" id="P26717">
    <property type="glycosylation" value="3 sites"/>
</dbReference>
<dbReference type="BioMuta" id="KLRC2"/>
<dbReference type="DMDM" id="20141529"/>
<dbReference type="jPOST" id="P26717"/>
<dbReference type="MassIVE" id="P26717"/>
<dbReference type="PaxDb" id="9606-ENSP00000371327"/>
<dbReference type="PeptideAtlas" id="P26717"/>
<dbReference type="Antibodypedia" id="23323">
    <property type="antibodies" value="288 antibodies from 29 providers"/>
</dbReference>
<dbReference type="DNASU" id="3822"/>
<dbReference type="Ensembl" id="ENST00000381902.7">
    <property type="protein sequence ID" value="ENSP00000371327.2"/>
    <property type="gene ID" value="ENSG00000205809.11"/>
</dbReference>
<dbReference type="GeneID" id="3822"/>
<dbReference type="KEGG" id="hsa:3822"/>
<dbReference type="MANE-Select" id="ENST00000381902.7">
    <property type="protein sequence ID" value="ENSP00000371327.2"/>
    <property type="RefSeq nucleotide sequence ID" value="NM_002260.4"/>
    <property type="RefSeq protein sequence ID" value="NP_002251.2"/>
</dbReference>
<dbReference type="UCSC" id="uc001qyk.4">
    <property type="organism name" value="human"/>
</dbReference>
<dbReference type="AGR" id="HGNC:6375"/>
<dbReference type="CTD" id="3822"/>
<dbReference type="DisGeNET" id="3822"/>
<dbReference type="GeneCards" id="KLRC2"/>
<dbReference type="HGNC" id="HGNC:6375">
    <property type="gene designation" value="KLRC2"/>
</dbReference>
<dbReference type="HPA" id="ENSG00000205809">
    <property type="expression patterns" value="Tissue enhanced (brain, lymphoid tissue)"/>
</dbReference>
<dbReference type="MIM" id="602891">
    <property type="type" value="gene"/>
</dbReference>
<dbReference type="neXtProt" id="NX_P26717"/>
<dbReference type="OpenTargets" id="ENSG00000205809"/>
<dbReference type="PharmGKB" id="PA30164"/>
<dbReference type="VEuPathDB" id="HostDB:ENSG00000205809"/>
<dbReference type="eggNOG" id="ENOG502S6IE">
    <property type="taxonomic scope" value="Eukaryota"/>
</dbReference>
<dbReference type="GeneTree" id="ENSGT00940000163686"/>
<dbReference type="InParanoid" id="P26717"/>
<dbReference type="OrthoDB" id="10059571at2759"/>
<dbReference type="PAN-GO" id="P26717">
    <property type="GO annotations" value="5 GO annotations based on evolutionary models"/>
</dbReference>
<dbReference type="PhylomeDB" id="P26717"/>
<dbReference type="TreeFam" id="TF336674"/>
<dbReference type="PathwayCommons" id="P26717"/>
<dbReference type="Reactome" id="R-HSA-2172127">
    <property type="pathway name" value="DAP12 interactions"/>
</dbReference>
<dbReference type="Reactome" id="R-HSA-2424491">
    <property type="pathway name" value="DAP12 signaling"/>
</dbReference>
<dbReference type="SignaLink" id="P26717"/>
<dbReference type="BioGRID-ORCS" id="3822">
    <property type="hits" value="46 hits in 1035 CRISPR screens"/>
</dbReference>
<dbReference type="EvolutionaryTrace" id="P26717"/>
<dbReference type="GeneWiki" id="KLRC2"/>
<dbReference type="GenomeRNAi" id="3822"/>
<dbReference type="Pharos" id="P26717">
    <property type="development level" value="Tbio"/>
</dbReference>
<dbReference type="PRO" id="PR:P26717"/>
<dbReference type="Proteomes" id="UP000005640">
    <property type="component" value="Chromosome 12"/>
</dbReference>
<dbReference type="RNAct" id="P26717">
    <property type="molecule type" value="protein"/>
</dbReference>
<dbReference type="Bgee" id="ENSG00000205809">
    <property type="expression patterns" value="Expressed in granulocyte and 95 other cell types or tissues"/>
</dbReference>
<dbReference type="ExpressionAtlas" id="P26717">
    <property type="expression patterns" value="baseline and differential"/>
</dbReference>
<dbReference type="GO" id="GO:0009897">
    <property type="term" value="C:external side of plasma membrane"/>
    <property type="evidence" value="ECO:0000318"/>
    <property type="project" value="GO_Central"/>
</dbReference>
<dbReference type="GO" id="GO:0005886">
    <property type="term" value="C:plasma membrane"/>
    <property type="evidence" value="ECO:0000314"/>
    <property type="project" value="UniProtKB"/>
</dbReference>
<dbReference type="GO" id="GO:0043235">
    <property type="term" value="C:receptor complex"/>
    <property type="evidence" value="ECO:0000314"/>
    <property type="project" value="UniProtKB"/>
</dbReference>
<dbReference type="GO" id="GO:0062081">
    <property type="term" value="F:activating MHC class Ib receptor activity"/>
    <property type="evidence" value="ECO:0000314"/>
    <property type="project" value="UniProtKB"/>
</dbReference>
<dbReference type="GO" id="GO:0030246">
    <property type="term" value="F:carbohydrate binding"/>
    <property type="evidence" value="ECO:0007669"/>
    <property type="project" value="UniProtKB-KW"/>
</dbReference>
<dbReference type="GO" id="GO:0023024">
    <property type="term" value="F:MHC class I protein complex binding"/>
    <property type="evidence" value="ECO:0000353"/>
    <property type="project" value="UniProtKB"/>
</dbReference>
<dbReference type="GO" id="GO:1990405">
    <property type="term" value="F:protein antigen binding"/>
    <property type="evidence" value="ECO:0000314"/>
    <property type="project" value="UniProtKB"/>
</dbReference>
<dbReference type="GO" id="GO:0004888">
    <property type="term" value="F:transmembrane signaling receptor activity"/>
    <property type="evidence" value="ECO:0000318"/>
    <property type="project" value="GO_Central"/>
</dbReference>
<dbReference type="GO" id="GO:0002250">
    <property type="term" value="P:adaptive immune response"/>
    <property type="evidence" value="ECO:0007669"/>
    <property type="project" value="UniProtKB-KW"/>
</dbReference>
<dbReference type="GO" id="GO:0006968">
    <property type="term" value="P:cellular defense response"/>
    <property type="evidence" value="ECO:0000304"/>
    <property type="project" value="ProtInc"/>
</dbReference>
<dbReference type="GO" id="GO:0002228">
    <property type="term" value="P:natural killer cell mediated immunity"/>
    <property type="evidence" value="ECO:0000314"/>
    <property type="project" value="UniProtKB"/>
</dbReference>
<dbReference type="GO" id="GO:0043323">
    <property type="term" value="P:positive regulation of natural killer cell degranulation"/>
    <property type="evidence" value="ECO:0000314"/>
    <property type="project" value="UniProtKB"/>
</dbReference>
<dbReference type="GO" id="GO:0045954">
    <property type="term" value="P:positive regulation of natural killer cell mediated cytotoxicity"/>
    <property type="evidence" value="ECO:0000314"/>
    <property type="project" value="UniProtKB"/>
</dbReference>
<dbReference type="GO" id="GO:0032814">
    <property type="term" value="P:regulation of natural killer cell activation"/>
    <property type="evidence" value="ECO:0000303"/>
    <property type="project" value="ComplexPortal"/>
</dbReference>
<dbReference type="GO" id="GO:0007165">
    <property type="term" value="P:signal transduction"/>
    <property type="evidence" value="ECO:0000304"/>
    <property type="project" value="ProtInc"/>
</dbReference>
<dbReference type="GO" id="GO:0002223">
    <property type="term" value="P:stimulatory C-type lectin receptor signaling pathway"/>
    <property type="evidence" value="ECO:0000314"/>
    <property type="project" value="UniProtKB"/>
</dbReference>
<dbReference type="CDD" id="cd03593">
    <property type="entry name" value="CLECT_NK_receptors_like"/>
    <property type="match status" value="1"/>
</dbReference>
<dbReference type="FunFam" id="3.10.100.10:FF:000071">
    <property type="entry name" value="NKG2-A/NKG2-B type II integral membrane protein"/>
    <property type="match status" value="1"/>
</dbReference>
<dbReference type="FunFam" id="1.10.287.770:FF:000009">
    <property type="entry name" value="NKG2-C type II integral membrane protein"/>
    <property type="match status" value="1"/>
</dbReference>
<dbReference type="Gene3D" id="3.10.100.10">
    <property type="entry name" value="Mannose-Binding Protein A, subunit A"/>
    <property type="match status" value="1"/>
</dbReference>
<dbReference type="Gene3D" id="1.10.287.770">
    <property type="entry name" value="YojJ-like"/>
    <property type="match status" value="1"/>
</dbReference>
<dbReference type="InterPro" id="IPR001304">
    <property type="entry name" value="C-type_lectin-like"/>
</dbReference>
<dbReference type="InterPro" id="IPR016186">
    <property type="entry name" value="C-type_lectin-like/link_sf"/>
</dbReference>
<dbReference type="InterPro" id="IPR016187">
    <property type="entry name" value="CTDL_fold"/>
</dbReference>
<dbReference type="InterPro" id="IPR050919">
    <property type="entry name" value="NKG2/CD94_NK_receptors"/>
</dbReference>
<dbReference type="InterPro" id="IPR033992">
    <property type="entry name" value="NKR-like_CTLD"/>
</dbReference>
<dbReference type="PANTHER" id="PTHR22800">
    <property type="entry name" value="C-TYPE LECTIN PROTEINS"/>
    <property type="match status" value="1"/>
</dbReference>
<dbReference type="PANTHER" id="PTHR22800:SF247">
    <property type="entry name" value="NKG2-C TYPE II INTEGRAL MEMBRANE PROTEIN"/>
    <property type="match status" value="1"/>
</dbReference>
<dbReference type="Pfam" id="PF00059">
    <property type="entry name" value="Lectin_C"/>
    <property type="match status" value="1"/>
</dbReference>
<dbReference type="SMART" id="SM00034">
    <property type="entry name" value="CLECT"/>
    <property type="match status" value="1"/>
</dbReference>
<dbReference type="SUPFAM" id="SSF56436">
    <property type="entry name" value="C-type lectin-like"/>
    <property type="match status" value="1"/>
</dbReference>
<dbReference type="PROSITE" id="PS50041">
    <property type="entry name" value="C_TYPE_LECTIN_2"/>
    <property type="match status" value="1"/>
</dbReference>
<keyword id="KW-0002">3D-structure</keyword>
<keyword id="KW-1064">Adaptive immunity</keyword>
<keyword id="KW-1003">Cell membrane</keyword>
<keyword id="KW-1015">Disulfide bond</keyword>
<keyword id="KW-0325">Glycoprotein</keyword>
<keyword id="KW-0391">Immunity</keyword>
<keyword id="KW-0399">Innate immunity</keyword>
<keyword id="KW-0430">Lectin</keyword>
<keyword id="KW-0472">Membrane</keyword>
<keyword id="KW-1267">Proteomics identification</keyword>
<keyword id="KW-0675">Receptor</keyword>
<keyword id="KW-1185">Reference proteome</keyword>
<keyword id="KW-0735">Signal-anchor</keyword>
<keyword id="KW-0812">Transmembrane</keyword>
<keyword id="KW-1133">Transmembrane helix</keyword>
<sequence length="231" mass="26159">MNKQRGTFSEVSLAQDPKRQQRKPKGNKSSISGTEQEIFQVELNLQNPSLNHQGIDKIYDCQGLLPPPEKLTAEVLGIICIVLMATVLKTIVLIPFLEQNNFSPNTRTQKARHCGHCPEEWITYSNSCYYIGKERRTWEESLLACTSKNSSLLSIDNEEEMKFLASILPSSWIGVFRNSSHHPWVTINGLAFKHKIKDSDNAELNCAVLQVNRLKSAQCGSSMIYHCKHKL</sequence>
<reference key="1">
    <citation type="journal article" date="1991" name="J. Exp. Med.">
        <title>DNA sequence analysis of NKG2, a family of related cDNA clones encoding type II integral membrane proteins on human natural killer cells.</title>
        <authorList>
            <person name="Houchins J.P."/>
            <person name="Yabe T."/>
            <person name="McSherry C."/>
            <person name="Bach F.H."/>
        </authorList>
    </citation>
    <scope>NUCLEOTIDE SEQUENCE [MRNA]</scope>
</reference>
<reference key="2">
    <citation type="journal article" date="1998" name="Immunogenetics">
        <title>The genomic organization of NKG2C, E, F, and D receptor genes in the human natural killer gene complex.</title>
        <authorList>
            <person name="Glienke J."/>
            <person name="Sobanov Y."/>
            <person name="Brostjan C."/>
            <person name="Steffens C."/>
            <person name="Nguyen C."/>
            <person name="Lehrach H."/>
            <person name="Hofer E."/>
            <person name="Francis F."/>
        </authorList>
    </citation>
    <scope>NUCLEOTIDE SEQUENCE [GENOMIC DNA]</scope>
</reference>
<reference key="3">
    <citation type="journal article" date="2002" name="J. Immunol.">
        <title>Conservation and variation in human and common chimpanzee CD94 and NKG2 genes.</title>
        <authorList>
            <person name="Shum B.P."/>
            <person name="Flodin L.R."/>
            <person name="Muir D.G."/>
            <person name="Rajalingam R."/>
            <person name="Khakoo S.I."/>
            <person name="Cleland S."/>
            <person name="Guethlein L.A."/>
            <person name="Uhrberg M."/>
            <person name="Parham P."/>
        </authorList>
    </citation>
    <scope>NUCLEOTIDE SEQUENCE [MRNA]</scope>
</reference>
<reference key="4">
    <citation type="submission" date="1997-05" db="EMBL/GenBank/DDBJ databases">
        <authorList>
            <person name="Biassoni R."/>
        </authorList>
    </citation>
    <scope>NUCLEOTIDE SEQUENCE [MRNA]</scope>
    <source>
        <tissue>Lymphoid tissue</tissue>
    </source>
</reference>
<reference key="5">
    <citation type="journal article" date="2006" name="Nature">
        <title>The finished DNA sequence of human chromosome 12.</title>
        <authorList>
            <person name="Scherer S.E."/>
            <person name="Muzny D.M."/>
            <person name="Buhay C.J."/>
            <person name="Chen R."/>
            <person name="Cree A."/>
            <person name="Ding Y."/>
            <person name="Dugan-Rocha S."/>
            <person name="Gill R."/>
            <person name="Gunaratne P."/>
            <person name="Harris R.A."/>
            <person name="Hawes A.C."/>
            <person name="Hernandez J."/>
            <person name="Hodgson A.V."/>
            <person name="Hume J."/>
            <person name="Jackson A."/>
            <person name="Khan Z.M."/>
            <person name="Kovar-Smith C."/>
            <person name="Lewis L.R."/>
            <person name="Lozado R.J."/>
            <person name="Metzker M.L."/>
            <person name="Milosavljevic A."/>
            <person name="Miner G.R."/>
            <person name="Montgomery K.T."/>
            <person name="Morgan M.B."/>
            <person name="Nazareth L.V."/>
            <person name="Scott G."/>
            <person name="Sodergren E."/>
            <person name="Song X.-Z."/>
            <person name="Steffen D."/>
            <person name="Lovering R.C."/>
            <person name="Wheeler D.A."/>
            <person name="Worley K.C."/>
            <person name="Yuan Y."/>
            <person name="Zhang Z."/>
            <person name="Adams C.Q."/>
            <person name="Ansari-Lari M.A."/>
            <person name="Ayele M."/>
            <person name="Brown M.J."/>
            <person name="Chen G."/>
            <person name="Chen Z."/>
            <person name="Clerc-Blankenburg K.P."/>
            <person name="Davis C."/>
            <person name="Delgado O."/>
            <person name="Dinh H.H."/>
            <person name="Draper H."/>
            <person name="Gonzalez-Garay M.L."/>
            <person name="Havlak P."/>
            <person name="Jackson L.R."/>
            <person name="Jacob L.S."/>
            <person name="Kelly S.H."/>
            <person name="Li L."/>
            <person name="Li Z."/>
            <person name="Liu J."/>
            <person name="Liu W."/>
            <person name="Lu J."/>
            <person name="Maheshwari M."/>
            <person name="Nguyen B.-V."/>
            <person name="Okwuonu G.O."/>
            <person name="Pasternak S."/>
            <person name="Perez L.M."/>
            <person name="Plopper F.J.H."/>
            <person name="Santibanez J."/>
            <person name="Shen H."/>
            <person name="Tabor P.E."/>
            <person name="Verduzco D."/>
            <person name="Waldron L."/>
            <person name="Wang Q."/>
            <person name="Williams G.A."/>
            <person name="Zhang J."/>
            <person name="Zhou J."/>
            <person name="Allen C.C."/>
            <person name="Amin A.G."/>
            <person name="Anyalebechi V."/>
            <person name="Bailey M."/>
            <person name="Barbaria J.A."/>
            <person name="Bimage K.E."/>
            <person name="Bryant N.P."/>
            <person name="Burch P.E."/>
            <person name="Burkett C.E."/>
            <person name="Burrell K.L."/>
            <person name="Calderon E."/>
            <person name="Cardenas V."/>
            <person name="Carter K."/>
            <person name="Casias K."/>
            <person name="Cavazos I."/>
            <person name="Cavazos S.R."/>
            <person name="Ceasar H."/>
            <person name="Chacko J."/>
            <person name="Chan S.N."/>
            <person name="Chavez D."/>
            <person name="Christopoulos C."/>
            <person name="Chu J."/>
            <person name="Cockrell R."/>
            <person name="Cox C.D."/>
            <person name="Dang M."/>
            <person name="Dathorne S.R."/>
            <person name="David R."/>
            <person name="Davis C.M."/>
            <person name="Davy-Carroll L."/>
            <person name="Deshazo D.R."/>
            <person name="Donlin J.E."/>
            <person name="D'Souza L."/>
            <person name="Eaves K.A."/>
            <person name="Egan A."/>
            <person name="Emery-Cohen A.J."/>
            <person name="Escotto M."/>
            <person name="Flagg N."/>
            <person name="Forbes L.D."/>
            <person name="Gabisi A.M."/>
            <person name="Garza M."/>
            <person name="Hamilton C."/>
            <person name="Henderson N."/>
            <person name="Hernandez O."/>
            <person name="Hines S."/>
            <person name="Hogues M.E."/>
            <person name="Huang M."/>
            <person name="Idlebird D.G."/>
            <person name="Johnson R."/>
            <person name="Jolivet A."/>
            <person name="Jones S."/>
            <person name="Kagan R."/>
            <person name="King L.M."/>
            <person name="Leal B."/>
            <person name="Lebow H."/>
            <person name="Lee S."/>
            <person name="LeVan J.M."/>
            <person name="Lewis L.C."/>
            <person name="London P."/>
            <person name="Lorensuhewa L.M."/>
            <person name="Loulseged H."/>
            <person name="Lovett D.A."/>
            <person name="Lucier A."/>
            <person name="Lucier R.L."/>
            <person name="Ma J."/>
            <person name="Madu R.C."/>
            <person name="Mapua P."/>
            <person name="Martindale A.D."/>
            <person name="Martinez E."/>
            <person name="Massey E."/>
            <person name="Mawhiney S."/>
            <person name="Meador M.G."/>
            <person name="Mendez S."/>
            <person name="Mercado C."/>
            <person name="Mercado I.C."/>
            <person name="Merritt C.E."/>
            <person name="Miner Z.L."/>
            <person name="Minja E."/>
            <person name="Mitchell T."/>
            <person name="Mohabbat F."/>
            <person name="Mohabbat K."/>
            <person name="Montgomery B."/>
            <person name="Moore N."/>
            <person name="Morris S."/>
            <person name="Munidasa M."/>
            <person name="Ngo R.N."/>
            <person name="Nguyen N.B."/>
            <person name="Nickerson E."/>
            <person name="Nwaokelemeh O.O."/>
            <person name="Nwokenkwo S."/>
            <person name="Obregon M."/>
            <person name="Oguh M."/>
            <person name="Oragunye N."/>
            <person name="Oviedo R.J."/>
            <person name="Parish B.J."/>
            <person name="Parker D.N."/>
            <person name="Parrish J."/>
            <person name="Parks K.L."/>
            <person name="Paul H.A."/>
            <person name="Payton B.A."/>
            <person name="Perez A."/>
            <person name="Perrin W."/>
            <person name="Pickens A."/>
            <person name="Primus E.L."/>
            <person name="Pu L.-L."/>
            <person name="Puazo M."/>
            <person name="Quiles M.M."/>
            <person name="Quiroz J.B."/>
            <person name="Rabata D."/>
            <person name="Reeves K."/>
            <person name="Ruiz S.J."/>
            <person name="Shao H."/>
            <person name="Sisson I."/>
            <person name="Sonaike T."/>
            <person name="Sorelle R.P."/>
            <person name="Sutton A.E."/>
            <person name="Svatek A.F."/>
            <person name="Svetz L.A."/>
            <person name="Tamerisa K.S."/>
            <person name="Taylor T.R."/>
            <person name="Teague B."/>
            <person name="Thomas N."/>
            <person name="Thorn R.D."/>
            <person name="Trejos Z.Y."/>
            <person name="Trevino B.K."/>
            <person name="Ukegbu O.N."/>
            <person name="Urban J.B."/>
            <person name="Vasquez L.I."/>
            <person name="Vera V.A."/>
            <person name="Villasana D.M."/>
            <person name="Wang L."/>
            <person name="Ward-Moore S."/>
            <person name="Warren J.T."/>
            <person name="Wei X."/>
            <person name="White F."/>
            <person name="Williamson A.L."/>
            <person name="Wleczyk R."/>
            <person name="Wooden H.S."/>
            <person name="Wooden S.H."/>
            <person name="Yen J."/>
            <person name="Yoon L."/>
            <person name="Yoon V."/>
            <person name="Zorrilla S.E."/>
            <person name="Nelson D."/>
            <person name="Kucherlapati R."/>
            <person name="Weinstock G."/>
            <person name="Gibbs R.A."/>
        </authorList>
    </citation>
    <scope>NUCLEOTIDE SEQUENCE [LARGE SCALE GENOMIC DNA]</scope>
</reference>
<reference key="6">
    <citation type="journal article" date="2004" name="Genome Res.">
        <title>The status, quality, and expansion of the NIH full-length cDNA project: the Mammalian Gene Collection (MGC).</title>
        <authorList>
            <consortium name="The MGC Project Team"/>
        </authorList>
    </citation>
    <scope>NUCLEOTIDE SEQUENCE [LARGE SCALE MRNA]</scope>
    <source>
        <tissue>Liver</tissue>
    </source>
</reference>
<reference key="7">
    <citation type="journal article" date="1998" name="Eur. J. Immunol.">
        <title>HLA-E-bound peptides influence recognition by inhibitory and triggering CD94/NKG2 receptors: preferential response to an HLA-G-derived nonamer.</title>
        <authorList>
            <person name="Llano M."/>
            <person name="Lee N."/>
            <person name="Navarro F."/>
            <person name="Garcia P."/>
            <person name="Albar J.P."/>
            <person name="Geraghty D.E."/>
            <person name="Lopez-Botet M."/>
        </authorList>
    </citation>
    <scope>FUNCTION</scope>
</reference>
<reference key="8">
    <citation type="journal article" date="1998" name="Immunity">
        <title>Association of DAP12 with activating CD94/NKG2C NK cell receptors.</title>
        <authorList>
            <person name="Lanier L.L."/>
            <person name="Corliss B."/>
            <person name="Wu J."/>
            <person name="Phillips J.H."/>
        </authorList>
    </citation>
    <scope>FUNCTION</scope>
    <scope>INTERACTION WITH KLRD1</scope>
    <scope>MUTAGENESIS OF LYS-89</scope>
</reference>
<reference key="9">
    <citation type="journal article" date="1998" name="Nature">
        <title>HLA-E binds to natural killer cell receptors CD94/NKG2A, B and C.</title>
        <authorList>
            <person name="Braud V.M."/>
            <person name="Allan D.S."/>
            <person name="O'Callaghan C.A."/>
            <person name="Soederstroem K."/>
            <person name="D'Andrea A."/>
            <person name="Ogg G.S."/>
            <person name="Lazetic S."/>
            <person name="Young N.T."/>
            <person name="Bell J.I."/>
            <person name="Phillips J.H."/>
            <person name="Lanier L.L."/>
            <person name="McMichael A.J."/>
        </authorList>
    </citation>
    <scope>INTERACTION WITH HLA-E-PEPTIDE COMPLEX</scope>
</reference>
<reference key="10">
    <citation type="journal article" date="2005" name="Eur. J. Immunol.">
        <title>The CD94/NKG2C killer lectin-like receptor constitutes an alternative activation pathway for a subset of CD8+ T cells.</title>
        <authorList>
            <person name="Guma M."/>
            <person name="Busch L.K."/>
            <person name="Salazar-Fontana L.I."/>
            <person name="Bellosillo B."/>
            <person name="Morte C."/>
            <person name="Garcia P."/>
            <person name="Lopez-Botet M."/>
        </authorList>
    </citation>
    <scope>FUNCTION</scope>
</reference>
<reference key="11">
    <citation type="journal article" date="2007" name="Immunity">
        <title>The heterodimeric assembly of the CD94-NKG2 receptor family and implications for human leukocyte antigen-E recognition.</title>
        <authorList>
            <person name="Sullivan L.C."/>
            <person name="Clements C.S."/>
            <person name="Beddoe T."/>
            <person name="Johnson D."/>
            <person name="Hoare H.L."/>
            <person name="Lin J."/>
            <person name="Huyton T."/>
            <person name="Hopkins E.J."/>
            <person name="Reid H.H."/>
            <person name="Wilce M.C."/>
            <person name="Kabat J."/>
            <person name="Borrego F."/>
            <person name="Coligan J.E."/>
            <person name="Rossjohn J."/>
            <person name="Brooks A.G."/>
        </authorList>
    </citation>
    <scope>SUBUNIT</scope>
    <scope>MUTAGENESIS OF 165-ALA--LEU-168</scope>
</reference>
<reference key="12">
    <citation type="journal article" date="2011" name="J. Leukoc. Biol.">
        <title>NKG2A inhibits NKG2C effector functions of gammadelta T cells: implications in health and disease.</title>
        <authorList>
            <person name="Angelini D.F."/>
            <person name="Zambello R."/>
            <person name="Galandrini R."/>
            <person name="Diamantini A."/>
            <person name="Placido R."/>
            <person name="Micucci F."/>
            <person name="Poccia F."/>
            <person name="Semenzato G."/>
            <person name="Borsellino G."/>
            <person name="Santoni A."/>
            <person name="Battistini L."/>
        </authorList>
    </citation>
    <scope>FUNCTION</scope>
    <scope>SUBCELLULAR LOCATION</scope>
    <scope>TISSUE SPECIFICITY</scope>
</reference>
<reference key="13">
    <citation type="journal article" date="2011" name="Proc. Natl. Acad. Sci. U.S.A.">
        <title>Expansion of a unique CD57-positive NKG2Chi natural killer cell subset during acute human cytomegalovirus infection.</title>
        <authorList>
            <person name="Lopez-Verges S."/>
            <person name="Milush J.M."/>
            <person name="Schwartz B.S."/>
            <person name="Pando M.J."/>
            <person name="Jarjoura J."/>
            <person name="York V.A."/>
            <person name="Houchins J.P."/>
            <person name="Miller S."/>
            <person name="Kang S.M."/>
            <person name="Norris P.J."/>
            <person name="Nixon D.F."/>
            <person name="Lanier L.L."/>
        </authorList>
    </citation>
    <scope>FUNCTION</scope>
    <scope>SUBCELLULAR LOCATION</scope>
    <scope>TISSUE SPECIFICITY</scope>
</reference>
<reference key="14">
    <citation type="journal article" date="2018" name="Cell Rep.">
        <title>Distinct HLA-E Peptide Complexes Modify Antibody-Driven Effector Functions of Adaptive NK Cells.</title>
        <authorList>
            <person name="Roelle A."/>
            <person name="Meyer M."/>
            <person name="Calderazzo S."/>
            <person name="Jaeger D."/>
            <person name="Momburg F."/>
        </authorList>
    </citation>
    <scope>FUNCTION</scope>
</reference>
<reference key="15">
    <citation type="journal article" date="2023" name="Nat. Immunol.">
        <title>HLA class I signal peptide polymorphism determines the level of CD94/NKG2-HLA-E-mediated regulation of effector cell responses.</title>
        <authorList>
            <person name="Lin Z."/>
            <person name="Bashirova A.A."/>
            <person name="Viard M."/>
            <person name="Garner L."/>
            <person name="Quastel M."/>
            <person name="Beiersdorfer M."/>
            <person name="Kasprzak W.K."/>
            <person name="Akdag M."/>
            <person name="Yuki Y."/>
            <person name="Ojeda P."/>
            <person name="Das S."/>
            <person name="Andresson T."/>
            <person name="Naranbhai V."/>
            <person name="Horowitz A."/>
            <person name="McMichael A.J."/>
            <person name="Hoelzemer A."/>
            <person name="Gillespie G.M."/>
            <person name="Garcia-Beltran W.F."/>
            <person name="Carrington M."/>
        </authorList>
    </citation>
    <scope>FUNCTION</scope>
</reference>
<reference key="16">
    <citation type="journal article" date="2010" name="Nat. Immunol.">
        <title>The structural basis for intramembrane assembly of an activating immunoreceptor complex.</title>
        <authorList>
            <person name="Call M.E."/>
            <person name="Wucherpfennig K.W."/>
            <person name="Chou J.J."/>
        </authorList>
    </citation>
    <scope>STRUCTURE BY NMR OF 72-100 IN COMPLEX WITH TYROBP</scope>
    <scope>INTERACTION WITH TYROBP</scope>
    <scope>SUBUNIT</scope>
</reference>
<feature type="chain" id="PRO_0000046662" description="NKG2-C type II integral membrane protein">
    <location>
        <begin position="1"/>
        <end position="231"/>
    </location>
</feature>
<feature type="topological domain" description="Cytoplasmic" evidence="1">
    <location>
        <begin position="1"/>
        <end position="70"/>
    </location>
</feature>
<feature type="transmembrane region" description="Helical; Signal-anchor for type II membrane protein" evidence="1">
    <location>
        <begin position="71"/>
        <end position="93"/>
    </location>
</feature>
<feature type="topological domain" description="Extracellular" evidence="1">
    <location>
        <begin position="94"/>
        <end position="231"/>
    </location>
</feature>
<feature type="domain" description="C-type lectin" evidence="2">
    <location>
        <begin position="116"/>
        <end position="229"/>
    </location>
</feature>
<feature type="region of interest" description="Disordered" evidence="3">
    <location>
        <begin position="1"/>
        <end position="32"/>
    </location>
</feature>
<feature type="compositionally biased region" description="Polar residues" evidence="3">
    <location>
        <begin position="1"/>
        <end position="12"/>
    </location>
</feature>
<feature type="glycosylation site" description="N-linked (GlcNAc...) asparagine" evidence="1">
    <location>
        <position position="100"/>
    </location>
</feature>
<feature type="glycosylation site" description="N-linked (GlcNAc...) asparagine" evidence="1">
    <location>
        <position position="149"/>
    </location>
</feature>
<feature type="glycosylation site" description="N-linked (GlcNAc...) asparagine" evidence="1">
    <location>
        <position position="178"/>
    </location>
</feature>
<feature type="disulfide bond" evidence="2">
    <location>
        <begin position="117"/>
        <end position="128"/>
    </location>
</feature>
<feature type="disulfide bond" evidence="2">
    <location>
        <begin position="145"/>
        <end position="227"/>
    </location>
</feature>
<feature type="disulfide bond" evidence="2">
    <location>
        <begin position="206"/>
        <end position="219"/>
    </location>
</feature>
<feature type="sequence variant" id="VAR_013404" description="In allele NKG2-C*02; dbSNP:rs28403159.">
    <original>N</original>
    <variation>S</variation>
    <location>
        <position position="2"/>
    </location>
</feature>
<feature type="sequence variant" id="VAR_013405" description="In allele NKG2-C*02; dbSNP:rs1141715.">
    <original>F</original>
    <variation>S</variation>
    <location>
        <position position="102"/>
    </location>
</feature>
<feature type="mutagenesis site" description="Impairs the expression of KLRD1-KLRC2 on the cell surface." evidence="11">
    <original>K</original>
    <variation>L</variation>
    <location>
        <position position="89"/>
    </location>
</feature>
<feature type="mutagenesis site" description="Increases the affinity for HLA-E to a value similar to that observed for HLA-E-KLRD1-KLRC1 complex." evidence="5">
    <original>ASIL</original>
    <variation>SIIS</variation>
    <location>
        <begin position="165"/>
        <end position="168"/>
    </location>
</feature>
<feature type="sequence conflict" description="In Ref. 1; CAA38651." evidence="14" ref="1">
    <original>M</original>
    <variation>I</variation>
    <location>
        <position position="161"/>
    </location>
</feature>
<feature type="helix" evidence="15">
    <location>
        <begin position="76"/>
        <end position="97"/>
    </location>
</feature>
<organism>
    <name type="scientific">Homo sapiens</name>
    <name type="common">Human</name>
    <dbReference type="NCBI Taxonomy" id="9606"/>
    <lineage>
        <taxon>Eukaryota</taxon>
        <taxon>Metazoa</taxon>
        <taxon>Chordata</taxon>
        <taxon>Craniata</taxon>
        <taxon>Vertebrata</taxon>
        <taxon>Euteleostomi</taxon>
        <taxon>Mammalia</taxon>
        <taxon>Eutheria</taxon>
        <taxon>Euarchontoglires</taxon>
        <taxon>Primates</taxon>
        <taxon>Haplorrhini</taxon>
        <taxon>Catarrhini</taxon>
        <taxon>Hominidae</taxon>
        <taxon>Homo</taxon>
    </lineage>
</organism>
<accession>P26717</accession>
<accession>O43802</accession>
<accession>Q52M74</accession>
<accession>Q9NR42</accession>
<comment type="function">
    <text evidence="4 7 8 9 10 11 12">Immune activating receptor involved in self-nonself discrimination. In complex with KLRD1 on cytotoxic lymphocyte subsets, recognizes non-classical major histocompatibility (MHC) class Ib HLA-E loaded with signal sequence-derived peptides from non-classical MHC class Ib HLA-G molecules, likely playing a role in the generation and effector functions of adaptive natural killer (NK) cells and in maternal-fetal tolerance during pregnancy (PubMed:30134159, PubMed:37264229, PubMed:9754572). Regulates the effector functions of terminally differentiated cytotoxic lymphocyte subsets, and in particular may play a role in adaptive NK cell response to viral infection (PubMed:20952657, PubMed:21825173). Upon HLA-E-peptide binding, transmits intracellular signals via the adapter protein TYROBP/DAP12, triggering the phosphorylation of proximal signaling molecules and cell activation (PubMed:15940674, PubMed:9655483).</text>
</comment>
<comment type="subunit">
    <text evidence="5 6">Heterodimer with KLRD1; disulfide-linked. KLRD1-KLRC2 receptor complex interacts with TYROBP homodimer; this interaction is necessary for the expression on the cell surface (PubMed:20890284, PubMed:9655483). KLRD1-KLRC2 receptor complex can bind with low affinity to HLA-E loaded with self-peptides derived from the signal sequence of classical MHC class Ia (PubMed:18083576, PubMed:9486650).</text>
</comment>
<comment type="interaction">
    <interactant intactId="EBI-3862171">
        <id>P26717</id>
    </interactant>
    <interactant intactId="EBI-9018174">
        <id>Q13241</id>
        <label>KLRD1</label>
    </interactant>
    <organismsDiffer>false</organismsDiffer>
    <experiments>2</experiments>
</comment>
<comment type="subcellular location">
    <subcellularLocation>
        <location evidence="7 8">Cell membrane</location>
        <topology evidence="1">Single-pass type II membrane protein</topology>
    </subcellularLocation>
</comment>
<comment type="tissue specificity">
    <text evidence="7 8">Expressed in NK cell subsets, in particular in adaptive CD57-positive NK cells (at protein level) (PubMed:20952657, PubMed:21825173). Expressed in terminally differentiated cytotoxic gamma-delta T cells (at protein level) (PubMed:20952657). Expressed in alpha-beta T cells subsets (at protein level) (PubMed:20952657). KLRD1-KLRC1 and KLRD1-KLRC2 are differentially expressed within NK and T cell populations, with only minor subsets expressing both receptor complexes (at protein level) (PubMed:20952657).</text>
</comment>
<comment type="polymorphism">
    <text>Two alleles are known. The sequence shown is that of allele NKG2-C*01.</text>
</comment>
<name>NKG2C_HUMAN</name>
<protein>
    <recommendedName>
        <fullName>NKG2-C type II integral membrane protein</fullName>
    </recommendedName>
    <alternativeName>
        <fullName>CD159 antigen-like family member C</fullName>
    </alternativeName>
    <alternativeName>
        <fullName>NK cell receptor C</fullName>
    </alternativeName>
    <alternativeName>
        <fullName>NKG2-C-activating NK receptor</fullName>
    </alternativeName>
    <cdAntigenName>CD159c</cdAntigenName>
</protein>
<evidence type="ECO:0000255" key="1"/>
<evidence type="ECO:0000255" key="2">
    <source>
        <dbReference type="PROSITE-ProRule" id="PRU00040"/>
    </source>
</evidence>
<evidence type="ECO:0000256" key="3">
    <source>
        <dbReference type="SAM" id="MobiDB-lite"/>
    </source>
</evidence>
<evidence type="ECO:0000269" key="4">
    <source>
    </source>
</evidence>
<evidence type="ECO:0000269" key="5">
    <source>
    </source>
</evidence>
<evidence type="ECO:0000269" key="6">
    <source>
    </source>
</evidence>
<evidence type="ECO:0000269" key="7">
    <source>
    </source>
</evidence>
<evidence type="ECO:0000269" key="8">
    <source>
    </source>
</evidence>
<evidence type="ECO:0000269" key="9">
    <source>
    </source>
</evidence>
<evidence type="ECO:0000269" key="10">
    <source>
    </source>
</evidence>
<evidence type="ECO:0000269" key="11">
    <source>
    </source>
</evidence>
<evidence type="ECO:0000269" key="12">
    <source>
    </source>
</evidence>
<evidence type="ECO:0000303" key="13">
    <source>
    </source>
</evidence>
<evidence type="ECO:0000305" key="14"/>
<evidence type="ECO:0007829" key="15">
    <source>
        <dbReference type="PDB" id="2L35"/>
    </source>
</evidence>
<proteinExistence type="evidence at protein level"/>
<gene>
    <name type="primary">KLRC2</name>
    <name evidence="13" type="synonym">NKG2C</name>
</gene>